<dbReference type="EMBL" id="AP008971">
    <property type="protein sequence ID" value="BAG08506.1"/>
    <property type="molecule type" value="Genomic_DNA"/>
</dbReference>
<dbReference type="RefSeq" id="WP_002840294.1">
    <property type="nucleotide sequence ID" value="NC_010376.1"/>
</dbReference>
<dbReference type="SMR" id="B0S2B6"/>
<dbReference type="STRING" id="334413.FMG_1088"/>
<dbReference type="KEGG" id="fma:FMG_1088"/>
<dbReference type="eggNOG" id="COG0216">
    <property type="taxonomic scope" value="Bacteria"/>
</dbReference>
<dbReference type="HOGENOM" id="CLU_036856_0_1_9"/>
<dbReference type="Proteomes" id="UP000001319">
    <property type="component" value="Chromosome"/>
</dbReference>
<dbReference type="GO" id="GO:0005737">
    <property type="term" value="C:cytoplasm"/>
    <property type="evidence" value="ECO:0007669"/>
    <property type="project" value="UniProtKB-SubCell"/>
</dbReference>
<dbReference type="GO" id="GO:0016149">
    <property type="term" value="F:translation release factor activity, codon specific"/>
    <property type="evidence" value="ECO:0007669"/>
    <property type="project" value="UniProtKB-UniRule"/>
</dbReference>
<dbReference type="FunFam" id="3.30.160.20:FF:000004">
    <property type="entry name" value="Peptide chain release factor 1"/>
    <property type="match status" value="1"/>
</dbReference>
<dbReference type="FunFam" id="3.30.70.1660:FF:000002">
    <property type="entry name" value="Peptide chain release factor 1"/>
    <property type="match status" value="1"/>
</dbReference>
<dbReference type="FunFam" id="3.30.70.1660:FF:000004">
    <property type="entry name" value="Peptide chain release factor 1"/>
    <property type="match status" value="1"/>
</dbReference>
<dbReference type="Gene3D" id="3.30.160.20">
    <property type="match status" value="1"/>
</dbReference>
<dbReference type="Gene3D" id="3.30.70.1660">
    <property type="match status" value="2"/>
</dbReference>
<dbReference type="Gene3D" id="6.10.140.1950">
    <property type="match status" value="1"/>
</dbReference>
<dbReference type="HAMAP" id="MF_00093">
    <property type="entry name" value="Rel_fac_1"/>
    <property type="match status" value="1"/>
</dbReference>
<dbReference type="InterPro" id="IPR005139">
    <property type="entry name" value="PCRF"/>
</dbReference>
<dbReference type="InterPro" id="IPR000352">
    <property type="entry name" value="Pep_chain_release_fac_I"/>
</dbReference>
<dbReference type="InterPro" id="IPR045853">
    <property type="entry name" value="Pep_chain_release_fac_I_sf"/>
</dbReference>
<dbReference type="InterPro" id="IPR050057">
    <property type="entry name" value="Prokaryotic/Mito_RF"/>
</dbReference>
<dbReference type="InterPro" id="IPR004373">
    <property type="entry name" value="RF-1"/>
</dbReference>
<dbReference type="NCBIfam" id="TIGR00019">
    <property type="entry name" value="prfA"/>
    <property type="match status" value="1"/>
</dbReference>
<dbReference type="NCBIfam" id="NF001859">
    <property type="entry name" value="PRK00591.1"/>
    <property type="match status" value="1"/>
</dbReference>
<dbReference type="PANTHER" id="PTHR43804">
    <property type="entry name" value="LD18447P"/>
    <property type="match status" value="1"/>
</dbReference>
<dbReference type="PANTHER" id="PTHR43804:SF7">
    <property type="entry name" value="LD18447P"/>
    <property type="match status" value="1"/>
</dbReference>
<dbReference type="Pfam" id="PF03462">
    <property type="entry name" value="PCRF"/>
    <property type="match status" value="1"/>
</dbReference>
<dbReference type="Pfam" id="PF00472">
    <property type="entry name" value="RF-1"/>
    <property type="match status" value="1"/>
</dbReference>
<dbReference type="SMART" id="SM00937">
    <property type="entry name" value="PCRF"/>
    <property type="match status" value="1"/>
</dbReference>
<dbReference type="SUPFAM" id="SSF75620">
    <property type="entry name" value="Release factor"/>
    <property type="match status" value="1"/>
</dbReference>
<dbReference type="PROSITE" id="PS00745">
    <property type="entry name" value="RF_PROK_I"/>
    <property type="match status" value="1"/>
</dbReference>
<evidence type="ECO:0000255" key="1">
    <source>
        <dbReference type="HAMAP-Rule" id="MF_00093"/>
    </source>
</evidence>
<evidence type="ECO:0000256" key="2">
    <source>
        <dbReference type="SAM" id="MobiDB-lite"/>
    </source>
</evidence>
<organism>
    <name type="scientific">Finegoldia magna (strain ATCC 29328 / DSM 20472 / WAL 2508)</name>
    <name type="common">Peptostreptococcus magnus</name>
    <dbReference type="NCBI Taxonomy" id="334413"/>
    <lineage>
        <taxon>Bacteria</taxon>
        <taxon>Bacillati</taxon>
        <taxon>Bacillota</taxon>
        <taxon>Tissierellia</taxon>
        <taxon>Tissierellales</taxon>
        <taxon>Peptoniphilaceae</taxon>
        <taxon>Finegoldia</taxon>
    </lineage>
</organism>
<accession>B0S2B6</accession>
<reference key="1">
    <citation type="journal article" date="2008" name="DNA Res.">
        <title>Complete genome sequence of Finegoldia magna, an anaerobic opportunistic pathogen.</title>
        <authorList>
            <person name="Goto T."/>
            <person name="Yamashita A."/>
            <person name="Hirakawa H."/>
            <person name="Matsutani M."/>
            <person name="Todo K."/>
            <person name="Ohshima K."/>
            <person name="Toh H."/>
            <person name="Miyamoto K."/>
            <person name="Kuhara S."/>
            <person name="Hattori M."/>
            <person name="Shimizu T."/>
            <person name="Akimoto S."/>
        </authorList>
    </citation>
    <scope>NUCLEOTIDE SEQUENCE [LARGE SCALE GENOMIC DNA]</scope>
    <source>
        <strain>ATCC 29328 / DSM 20472 / WAL 2508</strain>
    </source>
</reference>
<protein>
    <recommendedName>
        <fullName evidence="1">Peptide chain release factor 1</fullName>
        <shortName evidence="1">RF-1</shortName>
    </recommendedName>
</protein>
<comment type="function">
    <text evidence="1">Peptide chain release factor 1 directs the termination of translation in response to the peptide chain termination codons UAG and UAA.</text>
</comment>
<comment type="subcellular location">
    <subcellularLocation>
        <location evidence="1">Cytoplasm</location>
    </subcellularLocation>
</comment>
<comment type="PTM">
    <text evidence="1">Methylated by PrmC. Methylation increases the termination efficiency of RF1.</text>
</comment>
<comment type="similarity">
    <text evidence="1">Belongs to the prokaryotic/mitochondrial release factor family.</text>
</comment>
<gene>
    <name evidence="1" type="primary">prfA</name>
    <name type="ordered locus">FMG_1088</name>
</gene>
<sequence>MFENLDSVVDKFKDLEVKVADPEVIADMENWTKLMKEHADLEPVVNKYLSYKDNLKNLEEDKELLGTTGDSEMEELLKDEISTLEEQIEKDQEELKILLLPKDPNDEKNVFIEIRAGAGGDEAGLFAGELLRMYQMYSDKKHWTTEIMDIQQQGVGGIKEVVMMVKGKGAYSRLKYESGVHRVQRVPQTESSGRIHTSTATVAVLPEAEDVDVKIEQKDLRIDVFRASGNGGQCVNTTDSAVRITHIPTGLVVTCQDEKSQIKNKDKAMKVLKSRLYDLMEEEKNKDRADARKSQVGTGDRSERIRTYNFPQGRITDHRINKTIFQLQNFLDGDIEEMIDDLTSYDQAEKLKMMN</sequence>
<name>RF1_FINM2</name>
<proteinExistence type="inferred from homology"/>
<feature type="chain" id="PRO_1000093456" description="Peptide chain release factor 1">
    <location>
        <begin position="1"/>
        <end position="355"/>
    </location>
</feature>
<feature type="region of interest" description="Disordered" evidence="2">
    <location>
        <begin position="283"/>
        <end position="304"/>
    </location>
</feature>
<feature type="compositionally biased region" description="Basic and acidic residues" evidence="2">
    <location>
        <begin position="283"/>
        <end position="293"/>
    </location>
</feature>
<feature type="modified residue" description="N5-methylglutamine" evidence="1">
    <location>
        <position position="233"/>
    </location>
</feature>
<keyword id="KW-0963">Cytoplasm</keyword>
<keyword id="KW-0488">Methylation</keyword>
<keyword id="KW-0648">Protein biosynthesis</keyword>
<keyword id="KW-1185">Reference proteome</keyword>